<comment type="similarity">
    <text evidence="1">Belongs to the UPF0301 (AlgH) family.</text>
</comment>
<name>YQGE_ECO7I</name>
<reference key="1">
    <citation type="journal article" date="2009" name="PLoS Genet.">
        <title>Organised genome dynamics in the Escherichia coli species results in highly diverse adaptive paths.</title>
        <authorList>
            <person name="Touchon M."/>
            <person name="Hoede C."/>
            <person name="Tenaillon O."/>
            <person name="Barbe V."/>
            <person name="Baeriswyl S."/>
            <person name="Bidet P."/>
            <person name="Bingen E."/>
            <person name="Bonacorsi S."/>
            <person name="Bouchier C."/>
            <person name="Bouvet O."/>
            <person name="Calteau A."/>
            <person name="Chiapello H."/>
            <person name="Clermont O."/>
            <person name="Cruveiller S."/>
            <person name="Danchin A."/>
            <person name="Diard M."/>
            <person name="Dossat C."/>
            <person name="Karoui M.E."/>
            <person name="Frapy E."/>
            <person name="Garry L."/>
            <person name="Ghigo J.M."/>
            <person name="Gilles A.M."/>
            <person name="Johnson J."/>
            <person name="Le Bouguenec C."/>
            <person name="Lescat M."/>
            <person name="Mangenot S."/>
            <person name="Martinez-Jehanne V."/>
            <person name="Matic I."/>
            <person name="Nassif X."/>
            <person name="Oztas S."/>
            <person name="Petit M.A."/>
            <person name="Pichon C."/>
            <person name="Rouy Z."/>
            <person name="Ruf C.S."/>
            <person name="Schneider D."/>
            <person name="Tourret J."/>
            <person name="Vacherie B."/>
            <person name="Vallenet D."/>
            <person name="Medigue C."/>
            <person name="Rocha E.P.C."/>
            <person name="Denamur E."/>
        </authorList>
    </citation>
    <scope>NUCLEOTIDE SEQUENCE [LARGE SCALE GENOMIC DNA]</scope>
    <source>
        <strain>IAI39 / ExPEC</strain>
    </source>
</reference>
<feature type="chain" id="PRO_1000198274" description="UPF0301 protein YqgE">
    <location>
        <begin position="1"/>
        <end position="187"/>
    </location>
</feature>
<proteinExistence type="inferred from homology"/>
<sequence length="187" mass="20700">MNLQHHFLIAMPALQDPIFRRSVVYICEHNTNGAMGIIVNKPLENLKIEGILEKLKITPEPRDESIRLDKPVMLGGPLAEDRGFILHTPPSNFASSIRISDNTVMTTSRDVLETLGTDKQPSDILVALGYASWEKGQLEQEILDNAWLTAPADLNILFKTPIADRWREAAKLIGVDILTMPGVAGHA</sequence>
<protein>
    <recommendedName>
        <fullName evidence="1">UPF0301 protein YqgE</fullName>
    </recommendedName>
</protein>
<accession>B7NI11</accession>
<dbReference type="EMBL" id="CU928164">
    <property type="protein sequence ID" value="CAR19483.1"/>
    <property type="molecule type" value="Genomic_DNA"/>
</dbReference>
<dbReference type="RefSeq" id="WP_001355636.1">
    <property type="nucleotide sequence ID" value="NC_011750.1"/>
</dbReference>
<dbReference type="RefSeq" id="YP_002409287.1">
    <property type="nucleotide sequence ID" value="NC_011750.1"/>
</dbReference>
<dbReference type="SMR" id="B7NI11"/>
<dbReference type="STRING" id="585057.ECIAI39_3366"/>
<dbReference type="KEGG" id="ect:ECIAI39_3366"/>
<dbReference type="PATRIC" id="fig|585057.6.peg.3494"/>
<dbReference type="HOGENOM" id="CLU_057596_1_0_6"/>
<dbReference type="Proteomes" id="UP000000749">
    <property type="component" value="Chromosome"/>
</dbReference>
<dbReference type="GO" id="GO:0005829">
    <property type="term" value="C:cytosol"/>
    <property type="evidence" value="ECO:0007669"/>
    <property type="project" value="TreeGrafter"/>
</dbReference>
<dbReference type="FunFam" id="3.30.70.1300:FF:000001">
    <property type="entry name" value="UPF0301 protein YqgE"/>
    <property type="match status" value="1"/>
</dbReference>
<dbReference type="Gene3D" id="3.40.1740.10">
    <property type="entry name" value="VC0467-like"/>
    <property type="match status" value="1"/>
</dbReference>
<dbReference type="Gene3D" id="3.30.70.1300">
    <property type="entry name" value="VC0467-like domains"/>
    <property type="match status" value="1"/>
</dbReference>
<dbReference type="HAMAP" id="MF_00758">
    <property type="entry name" value="UPF0301"/>
    <property type="match status" value="1"/>
</dbReference>
<dbReference type="InterPro" id="IPR003774">
    <property type="entry name" value="AlgH-like"/>
</dbReference>
<dbReference type="NCBIfam" id="NF001266">
    <property type="entry name" value="PRK00228.1-1"/>
    <property type="match status" value="1"/>
</dbReference>
<dbReference type="PANTHER" id="PTHR30327">
    <property type="entry name" value="UNCHARACTERIZED PROTEIN YQGE"/>
    <property type="match status" value="1"/>
</dbReference>
<dbReference type="PANTHER" id="PTHR30327:SF1">
    <property type="entry name" value="UPF0301 PROTEIN YQGE"/>
    <property type="match status" value="1"/>
</dbReference>
<dbReference type="Pfam" id="PF02622">
    <property type="entry name" value="DUF179"/>
    <property type="match status" value="1"/>
</dbReference>
<dbReference type="SUPFAM" id="SSF143456">
    <property type="entry name" value="VC0467-like"/>
    <property type="match status" value="1"/>
</dbReference>
<gene>
    <name evidence="1" type="primary">yqgE</name>
    <name type="ordered locus">ECIAI39_3366</name>
</gene>
<evidence type="ECO:0000255" key="1">
    <source>
        <dbReference type="HAMAP-Rule" id="MF_00758"/>
    </source>
</evidence>
<organism>
    <name type="scientific">Escherichia coli O7:K1 (strain IAI39 / ExPEC)</name>
    <dbReference type="NCBI Taxonomy" id="585057"/>
    <lineage>
        <taxon>Bacteria</taxon>
        <taxon>Pseudomonadati</taxon>
        <taxon>Pseudomonadota</taxon>
        <taxon>Gammaproteobacteria</taxon>
        <taxon>Enterobacterales</taxon>
        <taxon>Enterobacteriaceae</taxon>
        <taxon>Escherichia</taxon>
    </lineage>
</organism>